<name>ERV1_SCHPO</name>
<dbReference type="EC" id="1.8.3.2"/>
<dbReference type="EMBL" id="CU329670">
    <property type="protein sequence ID" value="CAB16284.1"/>
    <property type="molecule type" value="Genomic_DNA"/>
</dbReference>
<dbReference type="PIR" id="T38727">
    <property type="entry name" value="T38727"/>
</dbReference>
<dbReference type="RefSeq" id="NP_594974.1">
    <property type="nucleotide sequence ID" value="NM_001020405.2"/>
</dbReference>
<dbReference type="SMR" id="O14144"/>
<dbReference type="FunCoup" id="O14144">
    <property type="interactions" value="339"/>
</dbReference>
<dbReference type="STRING" id="284812.O14144"/>
<dbReference type="PaxDb" id="4896-SPAC3G6.08.1"/>
<dbReference type="EnsemblFungi" id="SPAC3G6.08.1">
    <property type="protein sequence ID" value="SPAC3G6.08.1:pep"/>
    <property type="gene ID" value="SPAC3G6.08"/>
</dbReference>
<dbReference type="GeneID" id="2543175"/>
<dbReference type="KEGG" id="spo:2543175"/>
<dbReference type="PomBase" id="SPAC3G6.08">
    <property type="gene designation" value="erv1"/>
</dbReference>
<dbReference type="VEuPathDB" id="FungiDB:SPAC3G6.08"/>
<dbReference type="eggNOG" id="KOG3355">
    <property type="taxonomic scope" value="Eukaryota"/>
</dbReference>
<dbReference type="HOGENOM" id="CLU_070631_1_0_1"/>
<dbReference type="InParanoid" id="O14144"/>
<dbReference type="OMA" id="PCRTCNT"/>
<dbReference type="PhylomeDB" id="O14144"/>
<dbReference type="PRO" id="PR:O14144"/>
<dbReference type="Proteomes" id="UP000002485">
    <property type="component" value="Chromosome I"/>
</dbReference>
<dbReference type="GO" id="GO:0005758">
    <property type="term" value="C:mitochondrial intermembrane space"/>
    <property type="evidence" value="ECO:0000266"/>
    <property type="project" value="PomBase"/>
</dbReference>
<dbReference type="GO" id="GO:0005739">
    <property type="term" value="C:mitochondrion"/>
    <property type="evidence" value="ECO:0000318"/>
    <property type="project" value="GO_Central"/>
</dbReference>
<dbReference type="GO" id="GO:0050660">
    <property type="term" value="F:flavin adenine dinucleotide binding"/>
    <property type="evidence" value="ECO:0000318"/>
    <property type="project" value="GO_Central"/>
</dbReference>
<dbReference type="GO" id="GO:0016971">
    <property type="term" value="F:flavin-dependent sulfhydryl oxidase activity"/>
    <property type="evidence" value="ECO:0000266"/>
    <property type="project" value="PomBase"/>
</dbReference>
<dbReference type="GO" id="GO:0160203">
    <property type="term" value="P:mitochondrial disulfide relay system"/>
    <property type="evidence" value="ECO:0000266"/>
    <property type="project" value="PomBase"/>
</dbReference>
<dbReference type="Gene3D" id="4.10.320.60">
    <property type="match status" value="1"/>
</dbReference>
<dbReference type="Gene3D" id="1.20.120.310">
    <property type="entry name" value="ERV/ALR sulfhydryl oxidase domain"/>
    <property type="match status" value="1"/>
</dbReference>
<dbReference type="InterPro" id="IPR039799">
    <property type="entry name" value="ALR/ERV"/>
</dbReference>
<dbReference type="InterPro" id="IPR036774">
    <property type="entry name" value="ERV/ALR_sulphydryl_oxid_sf"/>
</dbReference>
<dbReference type="InterPro" id="IPR017905">
    <property type="entry name" value="ERV/ALR_sulphydryl_oxidase"/>
</dbReference>
<dbReference type="PANTHER" id="PTHR12645">
    <property type="entry name" value="ALR/ERV"/>
    <property type="match status" value="1"/>
</dbReference>
<dbReference type="PANTHER" id="PTHR12645:SF0">
    <property type="entry name" value="FAD-LINKED SULFHYDRYL OXIDASE ALR"/>
    <property type="match status" value="1"/>
</dbReference>
<dbReference type="Pfam" id="PF04777">
    <property type="entry name" value="Evr1_Alr"/>
    <property type="match status" value="1"/>
</dbReference>
<dbReference type="SUPFAM" id="SSF69000">
    <property type="entry name" value="FAD-dependent thiol oxidase"/>
    <property type="match status" value="1"/>
</dbReference>
<dbReference type="PROSITE" id="PS51324">
    <property type="entry name" value="ERV_ALR"/>
    <property type="match status" value="1"/>
</dbReference>
<proteinExistence type="inferred from homology"/>
<sequence length="182" mass="20769">MVFGKRYRDKETGIIYDENGRPCKTCNIFSSFRNVAQQPNSSTVPEVKSNTQLESKQSSIDCNTNAIPDSVSFPRLPDVAELGRSTWTFLHAMAANFPKNPTPTQQNDMSSFLYNFSKFYPCWSCAEDLRIWMAKYGNSPRVDSRESLCEWICEAHNDVNERLGKPLFNCQVWSKKASELAD</sequence>
<gene>
    <name type="primary">erv1</name>
    <name type="ORF">SPAC3G6.08</name>
</gene>
<evidence type="ECO:0000250" key="1"/>
<evidence type="ECO:0000250" key="2">
    <source>
        <dbReference type="UniProtKB" id="P55789"/>
    </source>
</evidence>
<evidence type="ECO:0000255" key="3">
    <source>
        <dbReference type="PROSITE-ProRule" id="PRU00654"/>
    </source>
</evidence>
<comment type="function">
    <text evidence="3">FAD-dependent sulfhydryl oxidase that catalyzes disulfide bond formation. Required for the import and folding of small cysteine-containing proteins in the mitochondrial intermembrane space (IMS) (By similarity).</text>
</comment>
<comment type="catalytic activity">
    <reaction>
        <text>2 R'C(R)SH + O2 = R'C(R)S-S(R)CR' + H2O2</text>
        <dbReference type="Rhea" id="RHEA:17357"/>
        <dbReference type="ChEBI" id="CHEBI:15379"/>
        <dbReference type="ChEBI" id="CHEBI:16240"/>
        <dbReference type="ChEBI" id="CHEBI:16520"/>
        <dbReference type="ChEBI" id="CHEBI:17412"/>
        <dbReference type="EC" id="1.8.3.2"/>
    </reaction>
</comment>
<comment type="cofactor">
    <cofactor evidence="3">
        <name>FAD</name>
        <dbReference type="ChEBI" id="CHEBI:57692"/>
    </cofactor>
</comment>
<comment type="subcellular location">
    <subcellularLocation>
        <location evidence="1">Mitochondrion intermembrane space</location>
    </subcellularLocation>
</comment>
<accession>O14144</accession>
<keyword id="KW-1015">Disulfide bond</keyword>
<keyword id="KW-0274">FAD</keyword>
<keyword id="KW-0285">Flavoprotein</keyword>
<keyword id="KW-0496">Mitochondrion</keyword>
<keyword id="KW-0560">Oxidoreductase</keyword>
<keyword id="KW-1185">Reference proteome</keyword>
<reference key="1">
    <citation type="journal article" date="2002" name="Nature">
        <title>The genome sequence of Schizosaccharomyces pombe.</title>
        <authorList>
            <person name="Wood V."/>
            <person name="Gwilliam R."/>
            <person name="Rajandream M.A."/>
            <person name="Lyne M.H."/>
            <person name="Lyne R."/>
            <person name="Stewart A."/>
            <person name="Sgouros J.G."/>
            <person name="Peat N."/>
            <person name="Hayles J."/>
            <person name="Baker S.G."/>
            <person name="Basham D."/>
            <person name="Bowman S."/>
            <person name="Brooks K."/>
            <person name="Brown D."/>
            <person name="Brown S."/>
            <person name="Chillingworth T."/>
            <person name="Churcher C.M."/>
            <person name="Collins M."/>
            <person name="Connor R."/>
            <person name="Cronin A."/>
            <person name="Davis P."/>
            <person name="Feltwell T."/>
            <person name="Fraser A."/>
            <person name="Gentles S."/>
            <person name="Goble A."/>
            <person name="Hamlin N."/>
            <person name="Harris D.E."/>
            <person name="Hidalgo J."/>
            <person name="Hodgson G."/>
            <person name="Holroyd S."/>
            <person name="Hornsby T."/>
            <person name="Howarth S."/>
            <person name="Huckle E.J."/>
            <person name="Hunt S."/>
            <person name="Jagels K."/>
            <person name="James K.D."/>
            <person name="Jones L."/>
            <person name="Jones M."/>
            <person name="Leather S."/>
            <person name="McDonald S."/>
            <person name="McLean J."/>
            <person name="Mooney P."/>
            <person name="Moule S."/>
            <person name="Mungall K.L."/>
            <person name="Murphy L.D."/>
            <person name="Niblett D."/>
            <person name="Odell C."/>
            <person name="Oliver K."/>
            <person name="O'Neil S."/>
            <person name="Pearson D."/>
            <person name="Quail M.A."/>
            <person name="Rabbinowitsch E."/>
            <person name="Rutherford K.M."/>
            <person name="Rutter S."/>
            <person name="Saunders D."/>
            <person name="Seeger K."/>
            <person name="Sharp S."/>
            <person name="Skelton J."/>
            <person name="Simmonds M.N."/>
            <person name="Squares R."/>
            <person name="Squares S."/>
            <person name="Stevens K."/>
            <person name="Taylor K."/>
            <person name="Taylor R.G."/>
            <person name="Tivey A."/>
            <person name="Walsh S.V."/>
            <person name="Warren T."/>
            <person name="Whitehead S."/>
            <person name="Woodward J.R."/>
            <person name="Volckaert G."/>
            <person name="Aert R."/>
            <person name="Robben J."/>
            <person name="Grymonprez B."/>
            <person name="Weltjens I."/>
            <person name="Vanstreels E."/>
            <person name="Rieger M."/>
            <person name="Schaefer M."/>
            <person name="Mueller-Auer S."/>
            <person name="Gabel C."/>
            <person name="Fuchs M."/>
            <person name="Duesterhoeft A."/>
            <person name="Fritzc C."/>
            <person name="Holzer E."/>
            <person name="Moestl D."/>
            <person name="Hilbert H."/>
            <person name="Borzym K."/>
            <person name="Langer I."/>
            <person name="Beck A."/>
            <person name="Lehrach H."/>
            <person name="Reinhardt R."/>
            <person name="Pohl T.M."/>
            <person name="Eger P."/>
            <person name="Zimmermann W."/>
            <person name="Wedler H."/>
            <person name="Wambutt R."/>
            <person name="Purnelle B."/>
            <person name="Goffeau A."/>
            <person name="Cadieu E."/>
            <person name="Dreano S."/>
            <person name="Gloux S."/>
            <person name="Lelaure V."/>
            <person name="Mottier S."/>
            <person name="Galibert F."/>
            <person name="Aves S.J."/>
            <person name="Xiang Z."/>
            <person name="Hunt C."/>
            <person name="Moore K."/>
            <person name="Hurst S.M."/>
            <person name="Lucas M."/>
            <person name="Rochet M."/>
            <person name="Gaillardin C."/>
            <person name="Tallada V.A."/>
            <person name="Garzon A."/>
            <person name="Thode G."/>
            <person name="Daga R.R."/>
            <person name="Cruzado L."/>
            <person name="Jimenez J."/>
            <person name="Sanchez M."/>
            <person name="del Rey F."/>
            <person name="Benito J."/>
            <person name="Dominguez A."/>
            <person name="Revuelta J.L."/>
            <person name="Moreno S."/>
            <person name="Armstrong J."/>
            <person name="Forsburg S.L."/>
            <person name="Cerutti L."/>
            <person name="Lowe T."/>
            <person name="McCombie W.R."/>
            <person name="Paulsen I."/>
            <person name="Potashkin J."/>
            <person name="Shpakovski G.V."/>
            <person name="Ussery D."/>
            <person name="Barrell B.G."/>
            <person name="Nurse P."/>
        </authorList>
    </citation>
    <scope>NUCLEOTIDE SEQUENCE [LARGE SCALE GENOMIC DNA]</scope>
    <source>
        <strain>972 / ATCC 24843</strain>
    </source>
</reference>
<organism>
    <name type="scientific">Schizosaccharomyces pombe (strain 972 / ATCC 24843)</name>
    <name type="common">Fission yeast</name>
    <dbReference type="NCBI Taxonomy" id="284812"/>
    <lineage>
        <taxon>Eukaryota</taxon>
        <taxon>Fungi</taxon>
        <taxon>Dikarya</taxon>
        <taxon>Ascomycota</taxon>
        <taxon>Taphrinomycotina</taxon>
        <taxon>Schizosaccharomycetes</taxon>
        <taxon>Schizosaccharomycetales</taxon>
        <taxon>Schizosaccharomycetaceae</taxon>
        <taxon>Schizosaccharomyces</taxon>
    </lineage>
</organism>
<protein>
    <recommendedName>
        <fullName>Mitochondrial FAD-linked sulfhydryl oxidase erv1</fullName>
        <ecNumber>1.8.3.2</ecNumber>
    </recommendedName>
</protein>
<feature type="chain" id="PRO_0000339121" description="Mitochondrial FAD-linked sulfhydryl oxidase erv1">
    <location>
        <begin position="1"/>
        <end position="182"/>
    </location>
</feature>
<feature type="domain" description="ERV/ALR sulfhydryl oxidase" evidence="3">
    <location>
        <begin position="75"/>
        <end position="177"/>
    </location>
</feature>
<feature type="binding site" evidence="2">
    <location>
        <begin position="81"/>
        <end position="87"/>
    </location>
    <ligand>
        <name>FAD</name>
        <dbReference type="ChEBI" id="CHEBI:57692"/>
    </ligand>
</feature>
<feature type="binding site" evidence="2">
    <location>
        <position position="91"/>
    </location>
    <ligand>
        <name>FAD</name>
        <dbReference type="ChEBI" id="CHEBI:57692"/>
    </ligand>
</feature>
<feature type="binding site" evidence="2">
    <location>
        <position position="120"/>
    </location>
    <ligand>
        <name>FAD</name>
        <dbReference type="ChEBI" id="CHEBI:57692"/>
    </ligand>
</feature>
<feature type="binding site" evidence="2">
    <location>
        <begin position="153"/>
        <end position="165"/>
    </location>
    <ligand>
        <name>FAD</name>
        <dbReference type="ChEBI" id="CHEBI:57692"/>
    </ligand>
</feature>
<feature type="binding site" evidence="2">
    <location>
        <begin position="176"/>
        <end position="177"/>
    </location>
    <ligand>
        <name>FAD</name>
        <dbReference type="ChEBI" id="CHEBI:57692"/>
    </ligand>
</feature>
<feature type="disulfide bond" description="Redox-active" evidence="3">
    <location>
        <begin position="122"/>
        <end position="125"/>
    </location>
</feature>
<feature type="disulfide bond" evidence="3">
    <location>
        <begin position="153"/>
        <end position="170"/>
    </location>
</feature>